<comment type="function">
    <text evidence="1 4">Mitochondrial glutamate/H(+) symporter. Responsible for the transport of glutamate from the cytosol into the mitochondrial matrix with the concomitant import of a proton (PubMed:11897791). Plays a role in the control of glucose-stimulated insulin secretion (By similarity).</text>
</comment>
<comment type="catalytic activity">
    <reaction evidence="4">
        <text>L-glutamate(in) + H(+)(in) = L-glutamate(out) + H(+)(out)</text>
        <dbReference type="Rhea" id="RHEA:70955"/>
        <dbReference type="ChEBI" id="CHEBI:15378"/>
        <dbReference type="ChEBI" id="CHEBI:29985"/>
    </reaction>
</comment>
<comment type="biophysicochemical properties">
    <kinetics>
        <KM evidence="4">4.85 mM for glutamate</KM>
        <Vmax evidence="4">63.1 umol/min/g enzyme with glutamate as substrate</Vmax>
    </kinetics>
</comment>
<comment type="subcellular location">
    <subcellularLocation>
        <location evidence="1">Mitochondrion inner membrane</location>
        <topology evidence="2">Multi-pass membrane protein</topology>
    </subcellularLocation>
</comment>
<comment type="tissue specificity">
    <text evidence="4">Expressed at high levels in brain, liver, and pancreas.</text>
</comment>
<comment type="disease" evidence="5">
    <disease id="DI-00473">
        <name>Developmental and epileptic encephalopathy 3</name>
        <acronym>DEE3</acronym>
        <description>A severe form of epilepsy characterized by frequent tonic seizures or spasms beginning in infancy with a specific EEG finding of suppression-burst patterns, characterized by high-voltage bursts alternating with almost flat suppression phases. DEE3 is characterized by a very early onset, erratic and fragmentary myoclonus, massive myoclonus, partial motor seizures and late tonic spasms. The prognosis is poor, with no effective treatment, and children with the condition either die within 1 to 2 years after birth or survive in a persistent vegetative state.</description>
        <dbReference type="MIM" id="609304"/>
    </disease>
    <text>The disease is caused by variants affecting the gene represented in this entry.</text>
</comment>
<comment type="similarity">
    <text evidence="6">Belongs to the mitochondrial carrier (TC 2.A.29) family.</text>
</comment>
<comment type="sequence caution" evidence="6">
    <conflict type="erroneous initiation">
        <sequence resource="EMBL-CDS" id="AAH24212"/>
    </conflict>
</comment>
<protein>
    <recommendedName>
        <fullName>Mitochondrial glutamate carrier 1</fullName>
        <shortName>GC-1</shortName>
    </recommendedName>
    <alternativeName>
        <fullName>Glutamate/H(+) symporter 1</fullName>
    </alternativeName>
    <alternativeName>
        <fullName>Solute carrier family 25 member 22</fullName>
    </alternativeName>
</protein>
<keyword id="KW-0225">Disease variant</keyword>
<keyword id="KW-0887">Epilepsy</keyword>
<keyword id="KW-0472">Membrane</keyword>
<keyword id="KW-0496">Mitochondrion</keyword>
<keyword id="KW-0999">Mitochondrion inner membrane</keyword>
<keyword id="KW-1267">Proteomics identification</keyword>
<keyword id="KW-1185">Reference proteome</keyword>
<keyword id="KW-0677">Repeat</keyword>
<keyword id="KW-0769">Symport</keyword>
<keyword id="KW-0812">Transmembrane</keyword>
<keyword id="KW-1133">Transmembrane helix</keyword>
<keyword id="KW-0813">Transport</keyword>
<evidence type="ECO:0000250" key="1">
    <source>
        <dbReference type="UniProtKB" id="A0A0G2K5L2"/>
    </source>
</evidence>
<evidence type="ECO:0000255" key="2"/>
<evidence type="ECO:0000255" key="3">
    <source>
        <dbReference type="PROSITE-ProRule" id="PRU00282"/>
    </source>
</evidence>
<evidence type="ECO:0000269" key="4">
    <source>
    </source>
</evidence>
<evidence type="ECO:0000269" key="5">
    <source>
    </source>
</evidence>
<evidence type="ECO:0000305" key="6"/>
<evidence type="ECO:0000312" key="7">
    <source>
        <dbReference type="HGNC" id="HGNC:19954"/>
    </source>
</evidence>
<organism>
    <name type="scientific">Homo sapiens</name>
    <name type="common">Human</name>
    <dbReference type="NCBI Taxonomy" id="9606"/>
    <lineage>
        <taxon>Eukaryota</taxon>
        <taxon>Metazoa</taxon>
        <taxon>Chordata</taxon>
        <taxon>Craniata</taxon>
        <taxon>Vertebrata</taxon>
        <taxon>Euteleostomi</taxon>
        <taxon>Mammalia</taxon>
        <taxon>Eutheria</taxon>
        <taxon>Euarchontoglires</taxon>
        <taxon>Primates</taxon>
        <taxon>Haplorrhini</taxon>
        <taxon>Catarrhini</taxon>
        <taxon>Hominidae</taxon>
        <taxon>Homo</taxon>
    </lineage>
</organism>
<sequence length="323" mass="34470">MADKQISLPAKLINGGIAGLIGVTCVFPIDLAKTRLQNQQNGQRVYTSMSDCLIKTVRSEGYFGMYRGAAVNLTLVTPEKAIKLAANDFFRHQLSKDGQKLTLLKEMLAGCGAGTCQVIVTTPMEMLKIQLQDAGRIAAQRKILAAQGQLSAQGGAQPSVEAPAAPRPTATQLTRDLLRSRGIAGLYKGLGATLLRDVPFSVVYFPLFANLNQLGRPASEEKSPFYVSFLAGCVAGSAAAVAVNPCDVVKTRLQSLQRGVNEDTYSGILDCARKILRHEGPSAFLKGAYCRALVIAPLFGIAQVVYFLGIAESLLGLLQDPQA</sequence>
<accession>Q9H936</accession>
<accession>A8K366</accession>
<accession>C9J1H6</accession>
<accession>E9PJD3</accession>
<accession>E9PKB2</accession>
<accession>E9PL68</accession>
<accession>E9PN26</accession>
<accession>E9PNQ3</accession>
<accession>E9PP01</accession>
<accession>E9PR97</accession>
<accession>Q8TBU8</accession>
<proteinExistence type="evidence at protein level"/>
<name>GHC1_HUMAN</name>
<reference key="1">
    <citation type="journal article" date="2002" name="J. Biol. Chem.">
        <title>Identification of the mitochondrial glutamate transporter. Bacterial expression, reconstitution, functional characterization, and tissue distribution of two human isoforms.</title>
        <authorList>
            <person name="Fiermonte G."/>
            <person name="Palmieri L."/>
            <person name="Todisco S."/>
            <person name="Agrimi G."/>
            <person name="Palmieri F."/>
            <person name="Walker J.E."/>
        </authorList>
    </citation>
    <scope>NUCLEOTIDE SEQUENCE [MRNA]</scope>
    <scope>FUNCTION</scope>
    <scope>TISSUE SPECIFICITY</scope>
    <scope>TRANSPORTER ACTIVITY</scope>
    <scope>BIOPHYSICOCHEMICAL PROPERTIES</scope>
    <source>
        <tissue>Brain</tissue>
    </source>
</reference>
<reference key="2">
    <citation type="journal article" date="2004" name="Nat. Genet.">
        <title>Complete sequencing and characterization of 21,243 full-length human cDNAs.</title>
        <authorList>
            <person name="Ota T."/>
            <person name="Suzuki Y."/>
            <person name="Nishikawa T."/>
            <person name="Otsuki T."/>
            <person name="Sugiyama T."/>
            <person name="Irie R."/>
            <person name="Wakamatsu A."/>
            <person name="Hayashi K."/>
            <person name="Sato H."/>
            <person name="Nagai K."/>
            <person name="Kimura K."/>
            <person name="Makita H."/>
            <person name="Sekine M."/>
            <person name="Obayashi M."/>
            <person name="Nishi T."/>
            <person name="Shibahara T."/>
            <person name="Tanaka T."/>
            <person name="Ishii S."/>
            <person name="Yamamoto J."/>
            <person name="Saito K."/>
            <person name="Kawai Y."/>
            <person name="Isono Y."/>
            <person name="Nakamura Y."/>
            <person name="Nagahari K."/>
            <person name="Murakami K."/>
            <person name="Yasuda T."/>
            <person name="Iwayanagi T."/>
            <person name="Wagatsuma M."/>
            <person name="Shiratori A."/>
            <person name="Sudo H."/>
            <person name="Hosoiri T."/>
            <person name="Kaku Y."/>
            <person name="Kodaira H."/>
            <person name="Kondo H."/>
            <person name="Sugawara M."/>
            <person name="Takahashi M."/>
            <person name="Kanda K."/>
            <person name="Yokoi T."/>
            <person name="Furuya T."/>
            <person name="Kikkawa E."/>
            <person name="Omura Y."/>
            <person name="Abe K."/>
            <person name="Kamihara K."/>
            <person name="Katsuta N."/>
            <person name="Sato K."/>
            <person name="Tanikawa M."/>
            <person name="Yamazaki M."/>
            <person name="Ninomiya K."/>
            <person name="Ishibashi T."/>
            <person name="Yamashita H."/>
            <person name="Murakawa K."/>
            <person name="Fujimori K."/>
            <person name="Tanai H."/>
            <person name="Kimata M."/>
            <person name="Watanabe M."/>
            <person name="Hiraoka S."/>
            <person name="Chiba Y."/>
            <person name="Ishida S."/>
            <person name="Ono Y."/>
            <person name="Takiguchi S."/>
            <person name="Watanabe S."/>
            <person name="Yosida M."/>
            <person name="Hotuta T."/>
            <person name="Kusano J."/>
            <person name="Kanehori K."/>
            <person name="Takahashi-Fujii A."/>
            <person name="Hara H."/>
            <person name="Tanase T.-O."/>
            <person name="Nomura Y."/>
            <person name="Togiya S."/>
            <person name="Komai F."/>
            <person name="Hara R."/>
            <person name="Takeuchi K."/>
            <person name="Arita M."/>
            <person name="Imose N."/>
            <person name="Musashino K."/>
            <person name="Yuuki H."/>
            <person name="Oshima A."/>
            <person name="Sasaki N."/>
            <person name="Aotsuka S."/>
            <person name="Yoshikawa Y."/>
            <person name="Matsunawa H."/>
            <person name="Ichihara T."/>
            <person name="Shiohata N."/>
            <person name="Sano S."/>
            <person name="Moriya S."/>
            <person name="Momiyama H."/>
            <person name="Satoh N."/>
            <person name="Takami S."/>
            <person name="Terashima Y."/>
            <person name="Suzuki O."/>
            <person name="Nakagawa S."/>
            <person name="Senoh A."/>
            <person name="Mizoguchi H."/>
            <person name="Goto Y."/>
            <person name="Shimizu F."/>
            <person name="Wakebe H."/>
            <person name="Hishigaki H."/>
            <person name="Watanabe T."/>
            <person name="Sugiyama A."/>
            <person name="Takemoto M."/>
            <person name="Kawakami B."/>
            <person name="Yamazaki M."/>
            <person name="Watanabe K."/>
            <person name="Kumagai A."/>
            <person name="Itakura S."/>
            <person name="Fukuzumi Y."/>
            <person name="Fujimori Y."/>
            <person name="Komiyama M."/>
            <person name="Tashiro H."/>
            <person name="Tanigami A."/>
            <person name="Fujiwara T."/>
            <person name="Ono T."/>
            <person name="Yamada K."/>
            <person name="Fujii Y."/>
            <person name="Ozaki K."/>
            <person name="Hirao M."/>
            <person name="Ohmori Y."/>
            <person name="Kawabata A."/>
            <person name="Hikiji T."/>
            <person name="Kobatake N."/>
            <person name="Inagaki H."/>
            <person name="Ikema Y."/>
            <person name="Okamoto S."/>
            <person name="Okitani R."/>
            <person name="Kawakami T."/>
            <person name="Noguchi S."/>
            <person name="Itoh T."/>
            <person name="Shigeta K."/>
            <person name="Senba T."/>
            <person name="Matsumura K."/>
            <person name="Nakajima Y."/>
            <person name="Mizuno T."/>
            <person name="Morinaga M."/>
            <person name="Sasaki M."/>
            <person name="Togashi T."/>
            <person name="Oyama M."/>
            <person name="Hata H."/>
            <person name="Watanabe M."/>
            <person name="Komatsu T."/>
            <person name="Mizushima-Sugano J."/>
            <person name="Satoh T."/>
            <person name="Shirai Y."/>
            <person name="Takahashi Y."/>
            <person name="Nakagawa K."/>
            <person name="Okumura K."/>
            <person name="Nagase T."/>
            <person name="Nomura N."/>
            <person name="Kikuchi H."/>
            <person name="Masuho Y."/>
            <person name="Yamashita R."/>
            <person name="Nakai K."/>
            <person name="Yada T."/>
            <person name="Nakamura Y."/>
            <person name="Ohara O."/>
            <person name="Isogai T."/>
            <person name="Sugano S."/>
        </authorList>
    </citation>
    <scope>NUCLEOTIDE SEQUENCE [LARGE SCALE MRNA]</scope>
    <source>
        <tissue>Brain</tissue>
    </source>
</reference>
<reference key="3">
    <citation type="journal article" date="2006" name="Nature">
        <title>Human chromosome 11 DNA sequence and analysis including novel gene identification.</title>
        <authorList>
            <person name="Taylor T.D."/>
            <person name="Noguchi H."/>
            <person name="Totoki Y."/>
            <person name="Toyoda A."/>
            <person name="Kuroki Y."/>
            <person name="Dewar K."/>
            <person name="Lloyd C."/>
            <person name="Itoh T."/>
            <person name="Takeda T."/>
            <person name="Kim D.-W."/>
            <person name="She X."/>
            <person name="Barlow K.F."/>
            <person name="Bloom T."/>
            <person name="Bruford E."/>
            <person name="Chang J.L."/>
            <person name="Cuomo C.A."/>
            <person name="Eichler E."/>
            <person name="FitzGerald M.G."/>
            <person name="Jaffe D.B."/>
            <person name="LaButti K."/>
            <person name="Nicol R."/>
            <person name="Park H.-S."/>
            <person name="Seaman C."/>
            <person name="Sougnez C."/>
            <person name="Yang X."/>
            <person name="Zimmer A.R."/>
            <person name="Zody M.C."/>
            <person name="Birren B.W."/>
            <person name="Nusbaum C."/>
            <person name="Fujiyama A."/>
            <person name="Hattori M."/>
            <person name="Rogers J."/>
            <person name="Lander E.S."/>
            <person name="Sakaki Y."/>
        </authorList>
    </citation>
    <scope>NUCLEOTIDE SEQUENCE [LARGE SCALE GENOMIC DNA]</scope>
</reference>
<reference key="4">
    <citation type="journal article" date="2004" name="Genome Res.">
        <title>The status, quality, and expansion of the NIH full-length cDNA project: the Mammalian Gene Collection (MGC).</title>
        <authorList>
            <consortium name="The MGC Project Team"/>
        </authorList>
    </citation>
    <scope>NUCLEOTIDE SEQUENCE [LARGE SCALE MRNA]</scope>
    <source>
        <tissue>Lung</tissue>
        <tissue>Muscle</tissue>
        <tissue>Skin</tissue>
    </source>
</reference>
<reference key="5">
    <citation type="journal article" date="2011" name="BMC Syst. Biol.">
        <title>Initial characterization of the human central proteome.</title>
        <authorList>
            <person name="Burkard T.R."/>
            <person name="Planyavsky M."/>
            <person name="Kaupe I."/>
            <person name="Breitwieser F.P."/>
            <person name="Buerckstuemmer T."/>
            <person name="Bennett K.L."/>
            <person name="Superti-Furga G."/>
            <person name="Colinge J."/>
        </authorList>
    </citation>
    <scope>IDENTIFICATION BY MASS SPECTROMETRY [LARGE SCALE ANALYSIS]</scope>
</reference>
<reference key="6">
    <citation type="journal article" date="2014" name="J. Proteomics">
        <title>An enzyme assisted RP-RPLC approach for in-depth analysis of human liver phosphoproteome.</title>
        <authorList>
            <person name="Bian Y."/>
            <person name="Song C."/>
            <person name="Cheng K."/>
            <person name="Dong M."/>
            <person name="Wang F."/>
            <person name="Huang J."/>
            <person name="Sun D."/>
            <person name="Wang L."/>
            <person name="Ye M."/>
            <person name="Zou H."/>
        </authorList>
    </citation>
    <scope>IDENTIFICATION BY MASS SPECTROMETRY [LARGE SCALE ANALYSIS]</scope>
    <source>
        <tissue>Liver</tissue>
    </source>
</reference>
<reference key="7">
    <citation type="journal article" date="2015" name="Proteomics">
        <title>N-terminome analysis of the human mitochondrial proteome.</title>
        <authorList>
            <person name="Vaca Jacome A.S."/>
            <person name="Rabilloud T."/>
            <person name="Schaeffer-Reiss C."/>
            <person name="Rompais M."/>
            <person name="Ayoub D."/>
            <person name="Lane L."/>
            <person name="Bairoch A."/>
            <person name="Van Dorsselaer A."/>
            <person name="Carapito C."/>
        </authorList>
    </citation>
    <scope>IDENTIFICATION BY MASS SPECTROMETRY [LARGE SCALE ANALYSIS]</scope>
</reference>
<reference key="8">
    <citation type="journal article" date="2005" name="Am. J. Hum. Genet.">
        <title>Impaired mitochondrial glutamate transport in autosomal recessive neonatal myoclonic epilepsy.</title>
        <authorList>
            <person name="Molinari F."/>
            <person name="Raas-Rothschild A."/>
            <person name="Rio M."/>
            <person name="Fiermonte G."/>
            <person name="Encha-Razavi F."/>
            <person name="Palmieri L."/>
            <person name="Palmieri F."/>
            <person name="Ben-Neriah Z."/>
            <person name="Kadhom N."/>
            <person name="Vekemans M."/>
            <person name="Attie-Bitach T."/>
            <person name="Munnich A."/>
            <person name="Rustin P."/>
            <person name="Colleaux L."/>
        </authorList>
    </citation>
    <scope>VARIANT DEE3 LEU-206</scope>
    <scope>CHARACTERIZATION OF VARIANT DEE3 LEU-206</scope>
</reference>
<gene>
    <name evidence="7" type="primary">SLC25A22</name>
    <name type="synonym">GC1</name>
</gene>
<dbReference type="EMBL" id="AJ428202">
    <property type="protein sequence ID" value="CAD21007.1"/>
    <property type="molecule type" value="mRNA"/>
</dbReference>
<dbReference type="EMBL" id="AK023106">
    <property type="protein sequence ID" value="BAB14407.1"/>
    <property type="molecule type" value="mRNA"/>
</dbReference>
<dbReference type="EMBL" id="AK290481">
    <property type="protein sequence ID" value="BAF83170.1"/>
    <property type="molecule type" value="mRNA"/>
</dbReference>
<dbReference type="EMBL" id="AP006621">
    <property type="status" value="NOT_ANNOTATED_CDS"/>
    <property type="molecule type" value="Genomic_DNA"/>
</dbReference>
<dbReference type="EMBL" id="BC019033">
    <property type="protein sequence ID" value="AAH19033.1"/>
    <property type="molecule type" value="mRNA"/>
</dbReference>
<dbReference type="EMBL" id="BC023545">
    <property type="protein sequence ID" value="AAH23545.1"/>
    <property type="molecule type" value="mRNA"/>
</dbReference>
<dbReference type="EMBL" id="BC024212">
    <property type="protein sequence ID" value="AAH24212.2"/>
    <property type="status" value="ALT_INIT"/>
    <property type="molecule type" value="mRNA"/>
</dbReference>
<dbReference type="CCDS" id="CCDS7715.1"/>
<dbReference type="RefSeq" id="NP_001177989.1">
    <property type="nucleotide sequence ID" value="NM_001191060.2"/>
</dbReference>
<dbReference type="RefSeq" id="NP_001177990.1">
    <property type="nucleotide sequence ID" value="NM_001191061.2"/>
</dbReference>
<dbReference type="RefSeq" id="NP_001412266.1">
    <property type="nucleotide sequence ID" value="NM_001425337.1"/>
</dbReference>
<dbReference type="RefSeq" id="NP_001412267.1">
    <property type="nucleotide sequence ID" value="NM_001425338.1"/>
</dbReference>
<dbReference type="RefSeq" id="NP_001412268.1">
    <property type="nucleotide sequence ID" value="NM_001425339.1"/>
</dbReference>
<dbReference type="RefSeq" id="NP_078974.1">
    <property type="nucleotide sequence ID" value="NM_024698.6"/>
</dbReference>
<dbReference type="RefSeq" id="XP_011518671.1">
    <property type="nucleotide sequence ID" value="XM_011520369.1"/>
</dbReference>
<dbReference type="RefSeq" id="XP_011518672.1">
    <property type="nucleotide sequence ID" value="XM_011520370.3"/>
</dbReference>
<dbReference type="RefSeq" id="XP_011518673.1">
    <property type="nucleotide sequence ID" value="XM_011520371.1"/>
</dbReference>
<dbReference type="RefSeq" id="XP_024304455.1">
    <property type="nucleotide sequence ID" value="XM_024448687.2"/>
</dbReference>
<dbReference type="RefSeq" id="XP_024304456.1">
    <property type="nucleotide sequence ID" value="XM_024448688.2"/>
</dbReference>
<dbReference type="RefSeq" id="XP_024304457.1">
    <property type="nucleotide sequence ID" value="XM_024448689.2"/>
</dbReference>
<dbReference type="RefSeq" id="XP_047283555.1">
    <property type="nucleotide sequence ID" value="XM_047427599.1"/>
</dbReference>
<dbReference type="RefSeq" id="XP_047283556.1">
    <property type="nucleotide sequence ID" value="XM_047427600.1"/>
</dbReference>
<dbReference type="RefSeq" id="XP_047283557.1">
    <property type="nucleotide sequence ID" value="XM_047427601.1"/>
</dbReference>
<dbReference type="RefSeq" id="XP_054225935.1">
    <property type="nucleotide sequence ID" value="XM_054369960.1"/>
</dbReference>
<dbReference type="RefSeq" id="XP_054225936.1">
    <property type="nucleotide sequence ID" value="XM_054369961.1"/>
</dbReference>
<dbReference type="RefSeq" id="XP_054225937.1">
    <property type="nucleotide sequence ID" value="XM_054369962.1"/>
</dbReference>
<dbReference type="RefSeq" id="XP_054225939.1">
    <property type="nucleotide sequence ID" value="XM_054369964.1"/>
</dbReference>
<dbReference type="RefSeq" id="XP_054225941.1">
    <property type="nucleotide sequence ID" value="XM_054369966.1"/>
</dbReference>
<dbReference type="RefSeq" id="XP_054225942.1">
    <property type="nucleotide sequence ID" value="XM_054369967.1"/>
</dbReference>
<dbReference type="RefSeq" id="XP_054225943.1">
    <property type="nucleotide sequence ID" value="XM_054369968.1"/>
</dbReference>
<dbReference type="SMR" id="Q9H936"/>
<dbReference type="BioGRID" id="122862">
    <property type="interactions" value="128"/>
</dbReference>
<dbReference type="FunCoup" id="Q9H936">
    <property type="interactions" value="948"/>
</dbReference>
<dbReference type="IntAct" id="Q9H936">
    <property type="interactions" value="89"/>
</dbReference>
<dbReference type="MINT" id="Q9H936"/>
<dbReference type="STRING" id="9606.ENSP00000322020"/>
<dbReference type="DrugBank" id="DB00142">
    <property type="generic name" value="Glutamic acid"/>
</dbReference>
<dbReference type="TCDB" id="2.A.29.14.3">
    <property type="family name" value="the mitochondrial carrier (mc) family"/>
</dbReference>
<dbReference type="GlyGen" id="Q9H936">
    <property type="glycosylation" value="1 site, 1 O-linked glycan (1 site)"/>
</dbReference>
<dbReference type="iPTMnet" id="Q9H936"/>
<dbReference type="PhosphoSitePlus" id="Q9H936"/>
<dbReference type="SwissPalm" id="Q9H936"/>
<dbReference type="BioMuta" id="SLC25A22"/>
<dbReference type="DMDM" id="34222632"/>
<dbReference type="jPOST" id="Q9H936"/>
<dbReference type="MassIVE" id="Q9H936"/>
<dbReference type="PaxDb" id="9606-ENSP00000322020"/>
<dbReference type="PeptideAtlas" id="Q9H936"/>
<dbReference type="ProteomicsDB" id="81277"/>
<dbReference type="Pumba" id="Q9H936"/>
<dbReference type="TopDownProteomics" id="Q9H936"/>
<dbReference type="Antibodypedia" id="9992">
    <property type="antibodies" value="64 antibodies from 22 providers"/>
</dbReference>
<dbReference type="DNASU" id="79751"/>
<dbReference type="Ensembl" id="ENST00000320230.9">
    <property type="protein sequence ID" value="ENSP00000322020.5"/>
    <property type="gene ID" value="ENSG00000177542.11"/>
</dbReference>
<dbReference type="Ensembl" id="ENST00000531214.5">
    <property type="protein sequence ID" value="ENSP00000437236.1"/>
    <property type="gene ID" value="ENSG00000177542.11"/>
</dbReference>
<dbReference type="Ensembl" id="ENST00000628067.3">
    <property type="protein sequence ID" value="ENSP00000486058.1"/>
    <property type="gene ID" value="ENSG00000177542.11"/>
</dbReference>
<dbReference type="GeneID" id="79751"/>
<dbReference type="KEGG" id="hsa:79751"/>
<dbReference type="MANE-Select" id="ENST00000628067.3">
    <property type="protein sequence ID" value="ENSP00000486058.1"/>
    <property type="RefSeq nucleotide sequence ID" value="NM_001191061.2"/>
    <property type="RefSeq protein sequence ID" value="NP_001177990.1"/>
</dbReference>
<dbReference type="UCSC" id="uc001lri.3">
    <property type="organism name" value="human"/>
</dbReference>
<dbReference type="AGR" id="HGNC:19954"/>
<dbReference type="CTD" id="79751"/>
<dbReference type="DisGeNET" id="79751"/>
<dbReference type="GeneCards" id="SLC25A22"/>
<dbReference type="HGNC" id="HGNC:19954">
    <property type="gene designation" value="SLC25A22"/>
</dbReference>
<dbReference type="HPA" id="ENSG00000177542">
    <property type="expression patterns" value="Tissue enhanced (brain, pancreas)"/>
</dbReference>
<dbReference type="MalaCards" id="SLC25A22"/>
<dbReference type="MIM" id="609302">
    <property type="type" value="gene"/>
</dbReference>
<dbReference type="MIM" id="609304">
    <property type="type" value="phenotype"/>
</dbReference>
<dbReference type="neXtProt" id="NX_Q9H936"/>
<dbReference type="OpenTargets" id="ENSG00000177542"/>
<dbReference type="Orphanet" id="1934">
    <property type="disease" value="Early infantile developmental and epileptic encephalopathy"/>
</dbReference>
<dbReference type="Orphanet" id="293181">
    <property type="disease" value="Epilepsy of infancy with migrating focal seizures"/>
</dbReference>
<dbReference type="PharmGKB" id="PA134955826"/>
<dbReference type="VEuPathDB" id="HostDB:ENSG00000177542"/>
<dbReference type="eggNOG" id="KOG0750">
    <property type="taxonomic scope" value="Eukaryota"/>
</dbReference>
<dbReference type="GeneTree" id="ENSGT00940000161196"/>
<dbReference type="InParanoid" id="Q9H936"/>
<dbReference type="OMA" id="QRLYTSM"/>
<dbReference type="OrthoDB" id="2382881at2759"/>
<dbReference type="PAN-GO" id="Q9H936">
    <property type="GO annotations" value="5 GO annotations based on evolutionary models"/>
</dbReference>
<dbReference type="PhylomeDB" id="Q9H936"/>
<dbReference type="TreeFam" id="TF313209"/>
<dbReference type="PathwayCommons" id="Q9H936"/>
<dbReference type="Reactome" id="R-HSA-428643">
    <property type="pathway name" value="Organic anion transporters"/>
</dbReference>
<dbReference type="Reactome" id="R-HSA-9856872">
    <property type="pathway name" value="Malate-aspartate shuttle"/>
</dbReference>
<dbReference type="SignaLink" id="Q9H936"/>
<dbReference type="BioGRID-ORCS" id="79751">
    <property type="hits" value="49 hits in 1168 CRISPR screens"/>
</dbReference>
<dbReference type="CD-CODE" id="FB4E32DD">
    <property type="entry name" value="Presynaptic clusters and postsynaptic densities"/>
</dbReference>
<dbReference type="GenomeRNAi" id="79751"/>
<dbReference type="Pharos" id="Q9H936">
    <property type="development level" value="Tbio"/>
</dbReference>
<dbReference type="PRO" id="PR:Q9H936"/>
<dbReference type="Proteomes" id="UP000005640">
    <property type="component" value="Chromosome 11"/>
</dbReference>
<dbReference type="RNAct" id="Q9H936">
    <property type="molecule type" value="protein"/>
</dbReference>
<dbReference type="Bgee" id="ENSG00000177542">
    <property type="expression patterns" value="Expressed in right hemisphere of cerebellum and 155 other cell types or tissues"/>
</dbReference>
<dbReference type="ExpressionAtlas" id="Q9H936">
    <property type="expression patterns" value="baseline and differential"/>
</dbReference>
<dbReference type="GO" id="GO:0005743">
    <property type="term" value="C:mitochondrial inner membrane"/>
    <property type="evidence" value="ECO:0000314"/>
    <property type="project" value="UniProtKB"/>
</dbReference>
<dbReference type="GO" id="GO:0005739">
    <property type="term" value="C:mitochondrion"/>
    <property type="evidence" value="ECO:0006056"/>
    <property type="project" value="FlyBase"/>
</dbReference>
<dbReference type="GO" id="GO:0005280">
    <property type="term" value="F:amino acid:proton symporter activity"/>
    <property type="evidence" value="ECO:0000314"/>
    <property type="project" value="UniProtKB"/>
</dbReference>
<dbReference type="GO" id="GO:0015183">
    <property type="term" value="F:L-aspartate transmembrane transporter activity"/>
    <property type="evidence" value="ECO:0000318"/>
    <property type="project" value="GO_Central"/>
</dbReference>
<dbReference type="GO" id="GO:0005313">
    <property type="term" value="F:L-glutamate transmembrane transporter activity"/>
    <property type="evidence" value="ECO:0000314"/>
    <property type="project" value="UniProtKB"/>
</dbReference>
<dbReference type="GO" id="GO:0015810">
    <property type="term" value="P:aspartate transmembrane transport"/>
    <property type="evidence" value="ECO:0000318"/>
    <property type="project" value="GO_Central"/>
</dbReference>
<dbReference type="GO" id="GO:0015813">
    <property type="term" value="P:L-glutamate transmembrane transport"/>
    <property type="evidence" value="ECO:0000314"/>
    <property type="project" value="UniProtKB"/>
</dbReference>
<dbReference type="GO" id="GO:0043490">
    <property type="term" value="P:malate-aspartate shuttle"/>
    <property type="evidence" value="ECO:0000318"/>
    <property type="project" value="GO_Central"/>
</dbReference>
<dbReference type="GO" id="GO:0006811">
    <property type="term" value="P:monoatomic ion transport"/>
    <property type="evidence" value="ECO:0000304"/>
    <property type="project" value="Reactome"/>
</dbReference>
<dbReference type="GO" id="GO:0050796">
    <property type="term" value="P:regulation of insulin secretion"/>
    <property type="evidence" value="ECO:0000250"/>
    <property type="project" value="UniProtKB"/>
</dbReference>
<dbReference type="FunFam" id="1.50.40.10:FF:000017">
    <property type="entry name" value="Solute carrier family 25 member 22a"/>
    <property type="match status" value="1"/>
</dbReference>
<dbReference type="Gene3D" id="1.50.40.10">
    <property type="entry name" value="Mitochondrial carrier domain"/>
    <property type="match status" value="1"/>
</dbReference>
<dbReference type="InterPro" id="IPR002067">
    <property type="entry name" value="Mit_carrier"/>
</dbReference>
<dbReference type="InterPro" id="IPR051028">
    <property type="entry name" value="Mito_Solute_Carrier"/>
</dbReference>
<dbReference type="InterPro" id="IPR018108">
    <property type="entry name" value="Mitochondrial_sb/sol_carrier"/>
</dbReference>
<dbReference type="InterPro" id="IPR023395">
    <property type="entry name" value="Mt_carrier_dom_sf"/>
</dbReference>
<dbReference type="PANTHER" id="PTHR45678">
    <property type="entry name" value="MITOCHONDRIAL 2-OXODICARBOXYLATE CARRIER 1-RELATED"/>
    <property type="match status" value="1"/>
</dbReference>
<dbReference type="PANTHER" id="PTHR45678:SF3">
    <property type="entry name" value="MITOCHONDRIAL GLUTAMATE CARRIER 1"/>
    <property type="match status" value="1"/>
</dbReference>
<dbReference type="Pfam" id="PF00153">
    <property type="entry name" value="Mito_carr"/>
    <property type="match status" value="3"/>
</dbReference>
<dbReference type="PRINTS" id="PR00926">
    <property type="entry name" value="MITOCARRIER"/>
</dbReference>
<dbReference type="SUPFAM" id="SSF103506">
    <property type="entry name" value="Mitochondrial carrier"/>
    <property type="match status" value="1"/>
</dbReference>
<dbReference type="PROSITE" id="PS50920">
    <property type="entry name" value="SOLCAR"/>
    <property type="match status" value="3"/>
</dbReference>
<feature type="chain" id="PRO_0000090619" description="Mitochondrial glutamate carrier 1">
    <location>
        <begin position="1"/>
        <end position="323"/>
    </location>
</feature>
<feature type="transmembrane region" description="Helical; Name=1" evidence="2">
    <location>
        <begin position="12"/>
        <end position="32"/>
    </location>
</feature>
<feature type="transmembrane region" description="Helical; Name=2" evidence="2">
    <location>
        <begin position="62"/>
        <end position="82"/>
    </location>
</feature>
<feature type="transmembrane region" description="Helical; Name=3" evidence="2">
    <location>
        <begin position="107"/>
        <end position="127"/>
    </location>
</feature>
<feature type="transmembrane region" description="Helical; Name=4" evidence="2">
    <location>
        <begin position="189"/>
        <end position="209"/>
    </location>
</feature>
<feature type="transmembrane region" description="Helical; Name=5" evidence="2">
    <location>
        <begin position="223"/>
        <end position="243"/>
    </location>
</feature>
<feature type="transmembrane region" description="Helical; Name=6" evidence="2">
    <location>
        <begin position="292"/>
        <end position="312"/>
    </location>
</feature>
<feature type="repeat" description="Solcar 1" evidence="3">
    <location>
        <begin position="6"/>
        <end position="93"/>
    </location>
</feature>
<feature type="repeat" description="Solcar 2" evidence="3">
    <location>
        <begin position="101"/>
        <end position="214"/>
    </location>
</feature>
<feature type="repeat" description="Solcar 3" evidence="3">
    <location>
        <begin position="223"/>
        <end position="312"/>
    </location>
</feature>
<feature type="sequence variant" id="VAR_022737" description="In DEE3; disrupts L-glutamate transporter activity; dbSNP:rs121918334." evidence="5">
    <original>P</original>
    <variation>L</variation>
    <location>
        <position position="206"/>
    </location>
</feature>